<dbReference type="EC" id="1.8.-.-" evidence="9"/>
<dbReference type="EMBL" id="EQ963480">
    <property type="protein sequence ID" value="EED49424.1"/>
    <property type="molecule type" value="Genomic_DNA"/>
</dbReference>
<dbReference type="RefSeq" id="XP_002381325.1">
    <property type="nucleotide sequence ID" value="XM_002381284.1"/>
</dbReference>
<dbReference type="SMR" id="B8NM73"/>
<dbReference type="STRING" id="332952.B8NM73"/>
<dbReference type="GlyCosmos" id="B8NM73">
    <property type="glycosylation" value="1 site, No reported glycans"/>
</dbReference>
<dbReference type="EnsemblFungi" id="EED49424">
    <property type="protein sequence ID" value="EED49424"/>
    <property type="gene ID" value="AFLA_095050"/>
</dbReference>
<dbReference type="VEuPathDB" id="FungiDB:AFLA_009743"/>
<dbReference type="eggNOG" id="KOG1399">
    <property type="taxonomic scope" value="Eukaryota"/>
</dbReference>
<dbReference type="HOGENOM" id="CLU_006909_5_2_1"/>
<dbReference type="OMA" id="EYRRPEN"/>
<dbReference type="GO" id="GO:0050660">
    <property type="term" value="F:flavin adenine dinucleotide binding"/>
    <property type="evidence" value="ECO:0007669"/>
    <property type="project" value="InterPro"/>
</dbReference>
<dbReference type="GO" id="GO:0004499">
    <property type="term" value="F:N,N-dimethylaniline monooxygenase activity"/>
    <property type="evidence" value="ECO:0007669"/>
    <property type="project" value="InterPro"/>
</dbReference>
<dbReference type="GO" id="GO:0050661">
    <property type="term" value="F:NADP binding"/>
    <property type="evidence" value="ECO:0007669"/>
    <property type="project" value="InterPro"/>
</dbReference>
<dbReference type="Gene3D" id="3.50.50.60">
    <property type="entry name" value="FAD/NAD(P)-binding domain"/>
    <property type="match status" value="2"/>
</dbReference>
<dbReference type="InterPro" id="IPR036188">
    <property type="entry name" value="FAD/NAD-bd_sf"/>
</dbReference>
<dbReference type="InterPro" id="IPR000960">
    <property type="entry name" value="Flavin_mOase"/>
</dbReference>
<dbReference type="InterPro" id="IPR020946">
    <property type="entry name" value="Flavin_mOase-like"/>
</dbReference>
<dbReference type="InterPro" id="IPR050346">
    <property type="entry name" value="FMO-like"/>
</dbReference>
<dbReference type="PANTHER" id="PTHR23023">
    <property type="entry name" value="DIMETHYLANILINE MONOOXYGENASE"/>
    <property type="match status" value="1"/>
</dbReference>
<dbReference type="Pfam" id="PF00743">
    <property type="entry name" value="FMO-like"/>
    <property type="match status" value="2"/>
</dbReference>
<dbReference type="Pfam" id="PF13450">
    <property type="entry name" value="NAD_binding_8"/>
    <property type="match status" value="1"/>
</dbReference>
<dbReference type="PIRSF" id="PIRSF000332">
    <property type="entry name" value="FMO"/>
    <property type="match status" value="1"/>
</dbReference>
<dbReference type="PRINTS" id="PR00419">
    <property type="entry name" value="ADXRDTASE"/>
</dbReference>
<dbReference type="SUPFAM" id="SSF51905">
    <property type="entry name" value="FAD/NAD(P)-binding domain"/>
    <property type="match status" value="2"/>
</dbReference>
<accession>B8NM73</accession>
<evidence type="ECO:0000255" key="1"/>
<evidence type="ECO:0000255" key="2">
    <source>
        <dbReference type="PROSITE-ProRule" id="PRU00498"/>
    </source>
</evidence>
<evidence type="ECO:0000256" key="3">
    <source>
        <dbReference type="SAM" id="MobiDB-lite"/>
    </source>
</evidence>
<evidence type="ECO:0000269" key="4">
    <source>
    </source>
</evidence>
<evidence type="ECO:0000269" key="5">
    <source>
    </source>
</evidence>
<evidence type="ECO:0000269" key="6">
    <source>
    </source>
</evidence>
<evidence type="ECO:0000303" key="7">
    <source>
    </source>
</evidence>
<evidence type="ECO:0000305" key="8"/>
<evidence type="ECO:0000305" key="9">
    <source>
    </source>
</evidence>
<proteinExistence type="evidence at protein level"/>
<gene>
    <name evidence="7" type="primary">ustF2</name>
    <name type="ORF">AFLA_095050</name>
</gene>
<reference key="1">
    <citation type="journal article" date="2015" name="Genome Announc.">
        <title>Genome sequence of Aspergillus flavus NRRL 3357, a strain that causes aflatoxin contamination of food and feed.</title>
        <authorList>
            <person name="Nierman W.C."/>
            <person name="Yu J."/>
            <person name="Fedorova-Abrams N.D."/>
            <person name="Losada L."/>
            <person name="Cleveland T.E."/>
            <person name="Bhatnagar D."/>
            <person name="Bennett J.W."/>
            <person name="Dean R."/>
            <person name="Payne G.A."/>
        </authorList>
    </citation>
    <scope>NUCLEOTIDE SEQUENCE [LARGE SCALE GENOMIC DNA]</scope>
    <source>
        <strain>ATCC 200026 / FGSC A1120 / IAM 13836 / NRRL 3357 / JCM 12722 / SRRC 167</strain>
    </source>
</reference>
<reference key="2">
    <citation type="journal article" date="2014" name="Fungal Genet. Biol.">
        <title>Characterization of the biosynthetic gene cluster for the ribosomally synthesized cyclic peptide ustiloxin B in Aspergillus flavus.</title>
        <authorList>
            <person name="Umemura M."/>
            <person name="Nagano N."/>
            <person name="Koike H."/>
            <person name="Kawano J."/>
            <person name="Ishii T."/>
            <person name="Miyamura Y."/>
            <person name="Kikuchi M."/>
            <person name="Tamano K."/>
            <person name="Yu J."/>
            <person name="Shin-ya K."/>
            <person name="Machida M."/>
        </authorList>
    </citation>
    <scope>FUNCTION</scope>
    <scope>DISRUPTION PHENOTYPE</scope>
</reference>
<reference key="3">
    <citation type="journal article" date="2016" name="Angew. Chem. Int. Ed.">
        <title>Unveiling the biosynthetic pathway of the ribosomally synthesized and post-translationally modified peptide ustiloxin B in filamentous fungi.</title>
        <authorList>
            <person name="Ye Y."/>
            <person name="Minami A."/>
            <person name="Igarashi Y."/>
            <person name="Izumikawa M."/>
            <person name="Umemura M."/>
            <person name="Nagano N."/>
            <person name="Machida M."/>
            <person name="Kawahara T."/>
            <person name="Shin-Ya K."/>
            <person name="Gomi K."/>
            <person name="Oikawa H."/>
        </authorList>
    </citation>
    <scope>FUNCTION</scope>
    <scope>DISRUPTION PHENOTYPE</scope>
    <scope>CATALYTIC ACTIVITY</scope>
</reference>
<reference key="4">
    <citation type="journal article" date="2016" name="Fungal Genet. Biol.">
        <title>Class of cyclic ribosomal peptide synthetic genes in filamentous fungi.</title>
        <authorList>
            <person name="Nagano N."/>
            <person name="Umemura M."/>
            <person name="Izumikawa M."/>
            <person name="Kawano J."/>
            <person name="Ishii T."/>
            <person name="Kikuchi M."/>
            <person name="Tomii K."/>
            <person name="Kumagai T."/>
            <person name="Yoshimi A."/>
            <person name="Machida M."/>
            <person name="Abe K."/>
            <person name="Shin-ya K."/>
            <person name="Asai K."/>
        </authorList>
    </citation>
    <scope>FUNCTION</scope>
    <scope>DISRUPTION PHENOTYPE</scope>
</reference>
<name>USTF2_ASPFN</name>
<organism>
    <name type="scientific">Aspergillus flavus (strain ATCC 200026 / FGSC A1120 / IAM 13836 / NRRL 3357 / JCM 12722 / SRRC 167)</name>
    <dbReference type="NCBI Taxonomy" id="332952"/>
    <lineage>
        <taxon>Eukaryota</taxon>
        <taxon>Fungi</taxon>
        <taxon>Dikarya</taxon>
        <taxon>Ascomycota</taxon>
        <taxon>Pezizomycotina</taxon>
        <taxon>Eurotiomycetes</taxon>
        <taxon>Eurotiomycetidae</taxon>
        <taxon>Eurotiales</taxon>
        <taxon>Aspergillaceae</taxon>
        <taxon>Aspergillus</taxon>
        <taxon>Aspergillus subgen. Circumdati</taxon>
    </lineage>
</organism>
<keyword id="KW-0274">FAD</keyword>
<keyword id="KW-0285">Flavoprotein</keyword>
<keyword id="KW-0325">Glycoprotein</keyword>
<keyword id="KW-0503">Monooxygenase</keyword>
<keyword id="KW-0521">NADP</keyword>
<keyword id="KW-0560">Oxidoreductase</keyword>
<keyword id="KW-0732">Signal</keyword>
<comment type="function">
    <text evidence="4 5 6">Flavin-containing monooxygenase; part of the gene cluster that mediates the biosynthesis of the secondary metabolite ustiloxin B, an antimitotic tetrapeptide (PubMed:24841822, PubMed:26703898, PubMed:27166860). First, ustA is processed by the subtilisin-like endoprotease Kex2 that is outside the ustiloxin B gene cluster, at the C-terminal side of Arg-Lys, after transfer to Golgi apparatus through the endoplasmic reticulum (ER) (PubMed:24841822). Cleavage by KEX2 generates 16 peptides YAIG-I to YAIG-XVI (PubMed:24841822). To process the precursor peptide further, at least two peptidases are necessary to cleave the N-terminal and C-terminal sides of the Tyr-Ala-Ile-Gly core peptide which serves as backbone for the synthesis of ustiloxin B, through cyclization and modification of the tyrosine with a non-protein coding amino acid, norvaline (PubMed:24841822). One of the two peptidases must be the serine peptidase ustP; and the other pepdidase is probably ustH (PubMed:24841822). Macrocyclization of the core peptide derived from ustA requires the tyrosinase ustQ, as well as the homologous oxidases ustYa and ustYb, and leads to the production of the first cyclization product N-desmethylustiloxin F (PubMed:26703898, PubMed:27166860). For the formation of N-desmethylustiloxin F, three oxidation steps are required, hydroxylation at the benzylic position, hydroxylation at either the aromatic ring of Tyr or beta-position of Ile, and oxidative cyclization (PubMed:27166860). UstQ may catalyze the oxidation of a phenol moiety, whereas the ustYa and ustYb are most likely responsible for the remaining two-step oxidations (PubMed:27166860). N-desmethylustiloxin F is then methylated by ustM to yield ustiloxin F which in turn substrate of the cytochrome P450 monooxygenase ustC which catalyzes the formation of S-deoxyustiloxin H (PubMed:27166860). The flavoprotein monooxygenases ustF1 and ustF2 then participate in the modification of the side chain of S-deoxyustiloxin H, leading to the synthesis of an oxime intermediate, via ustiloxin H (PubMed:27166860). Finally, carboxylative dehydration performed by the cysteine desulfurase-like protein ustD yields ustiloxin B (PubMed:27166860).</text>
</comment>
<comment type="pathway">
    <text evidence="6">Mycotoxin biosynthesis.</text>
</comment>
<comment type="disruption phenotype">
    <text evidence="4 5 6">Impairs the production of ustiloxin B but accumulates intermediates such as ustiloxin F and C (PubMed:24841822, PubMed:26703898, PubMed:27166860).</text>
</comment>
<comment type="similarity">
    <text evidence="8">Belongs to the FMO family.</text>
</comment>
<feature type="signal peptide" evidence="1">
    <location>
        <begin position="1"/>
        <end position="21"/>
    </location>
</feature>
<feature type="chain" id="PRO_0000437299" description="Flavin-containing monooxygenase ustF2">
    <location>
        <begin position="22"/>
        <end position="494"/>
    </location>
</feature>
<feature type="region of interest" description="Disordered" evidence="3">
    <location>
        <begin position="73"/>
        <end position="93"/>
    </location>
</feature>
<feature type="binding site" evidence="1">
    <location>
        <begin position="13"/>
        <end position="18"/>
    </location>
    <ligand>
        <name>FAD</name>
        <dbReference type="ChEBI" id="CHEBI:57692"/>
    </ligand>
</feature>
<feature type="binding site" evidence="1">
    <location>
        <begin position="250"/>
        <end position="255"/>
    </location>
    <ligand>
        <name>NADP(+)</name>
        <dbReference type="ChEBI" id="CHEBI:58349"/>
    </ligand>
</feature>
<feature type="glycosylation site" description="N-linked (GlcNAc...) asparagine" evidence="2">
    <location>
        <position position="459"/>
    </location>
</feature>
<sequence length="494" mass="55576">MANPQTTRVAVVGAGISGVLAAGHLLATGLEVTVFERNAAPGGVWYAIPFSGLLATREADAWARLYDERTPIEPSYPAMKPSKADPPATNEQETSRFMLQHAPPGPCYYNLQNNVPTPLLEVSLKPWPDGTPDTVRHDVIQRFIQDMSIEAKVHDVTRYEARVKKVVKDGAEWKITWSTPQVGLQSETSEFEQVSPFDVVIVASGHYHAPRVPDIPGLSDTKRKYGSRILHSKEYRRPENFRNKNILMIGGGVSSIDIANDISPFANTIYQSTRNSKFDLVESMLPENGVRVHEISHFEIQSHSDEPLSDDEPLPLTIHFESGQNLHGIHMIMLCTGYHITFPYLEEYHSDETTLQDADENILITDGTQVHNLYQDIFYIPDPTLVFVGLPYYTFTFSIFDFQAIVVAQVLSGTVQLPTETEMRSEYNAKVERVGLGKVFHSILGTEENYVHDLLTWVNTSRAAQELVAIKGFSPRWYEAKEALRQKYRAQVNK</sequence>
<protein>
    <recommendedName>
        <fullName evidence="7">Flavin-containing monooxygenase ustF2</fullName>
        <ecNumber evidence="9">1.8.-.-</ecNumber>
    </recommendedName>
    <alternativeName>
        <fullName evidence="7">Ustiloxin B biosynthesis protein F2</fullName>
    </alternativeName>
</protein>